<sequence>MNPTDIADTTLDESIYSNYYLYESIPKPCTKEGIKAFGELFLPPLYSLVFVFGLLGNSVVVLVLFKYKRLRSMTDVYLLNLAISDLLFVFSLPFWGYYAADQWVFGLGLCKMISWMYLVGFYSGIFFVMLMSIDRYLAIVHAVFSLRARTLTYGVITSLATWSVAVFASLPGFLFSTCYTERNHTYCKTKYSLNSTTWKVLSSLEINILGLVIPLGIMLFCYSMIIRTLQHCKNEKKNKAVKMIFAVVVLFLGFWTPYNIVLFLETLVELEVLQDCTFERYLDYAIQATETLAFVHCCLNPIIYFFLGEKFRKYILQLFKTCRGLFVLCQYCGLLQIYSADTPSSSYTQSTMDHDLHDAL</sequence>
<gene>
    <name type="primary">CCR4</name>
    <name type="synonym">CMKBR4</name>
</gene>
<reference key="1">
    <citation type="journal article" date="1995" name="J. Biol. Chem.">
        <title>Molecular cloning and functional expression of a novel CC chemokine receptor cDNA from a human basophilic cell line.</title>
        <authorList>
            <person name="Power C.A."/>
            <person name="Meyer A."/>
            <person name="Nemeth K."/>
            <person name="Bacon K.B."/>
            <person name="Hoogewerf A.J."/>
            <person name="Proudfoot A.E.I."/>
            <person name="Wells T.N.C."/>
        </authorList>
    </citation>
    <scope>NUCLEOTIDE SEQUENCE [MRNA]</scope>
    <source>
        <tissue>Spleen</tissue>
    </source>
</reference>
<reference key="2">
    <citation type="journal article" date="1999" name="Genes Immun.">
        <title>New variations of human CC-chemokine receptors CCR3 and CCR4.</title>
        <authorList>
            <person name="Kato H."/>
            <person name="Tsuchiya N."/>
            <person name="Izumi S."/>
            <person name="Miyamasu M."/>
            <person name="Nakajima T."/>
            <person name="Kawasaki H."/>
            <person name="Hirai K."/>
            <person name="Tokunaga K."/>
        </authorList>
    </citation>
    <scope>NUCLEOTIDE SEQUENCE [GENOMIC DNA]</scope>
    <scope>VARIANTS VAL-130 AND SER-178</scope>
</reference>
<reference key="3">
    <citation type="submission" date="2003-06" db="EMBL/GenBank/DDBJ databases">
        <title>cDNA clones of human proteins involved in signal transduction sequenced by the Guthrie cDNA resource center (www.cdna.org).</title>
        <authorList>
            <person name="Kopatz S.A."/>
            <person name="Aronstam R.S."/>
            <person name="Sharma S.V."/>
        </authorList>
    </citation>
    <scope>NUCLEOTIDE SEQUENCE [LARGE SCALE MRNA]</scope>
</reference>
<reference key="4">
    <citation type="journal article" date="2004" name="Genome Res.">
        <title>The status, quality, and expansion of the NIH full-length cDNA project: the Mammalian Gene Collection (MGC).</title>
        <authorList>
            <consortium name="The MGC Project Team"/>
        </authorList>
    </citation>
    <scope>NUCLEOTIDE SEQUENCE [LARGE SCALE MRNA]</scope>
    <source>
        <tissue>Blood</tissue>
    </source>
</reference>
<reference key="5">
    <citation type="journal article" date="1997" name="J. Biol. Chem.">
        <title>The T cell-directed CC chemokine TARC is a highly specific biological ligand for CC chemokine receptor 4.</title>
        <authorList>
            <person name="Imai T."/>
            <person name="Baba M."/>
            <person name="Nishimura M."/>
            <person name="Kakizaki M."/>
            <person name="Takagi S."/>
            <person name="Yoshie O."/>
        </authorList>
    </citation>
    <scope>FUNCTION</scope>
    <scope>TISSUE SPECIFICITY</scope>
</reference>
<reference key="6">
    <citation type="journal article" date="1998" name="J. Biol. Chem.">
        <title>Macrophage-derived chemokine is a functional ligand for the CC chemokine receptor 4.</title>
        <authorList>
            <person name="Imai T."/>
            <person name="Chantry D."/>
            <person name="Raport C.J."/>
            <person name="Wood C.L."/>
            <person name="Nishimura M."/>
            <person name="Godiska R."/>
            <person name="Yoshie O."/>
            <person name="Gray P.W."/>
        </authorList>
    </citation>
    <scope>FUNCTION</scope>
</reference>
<reference key="7">
    <citation type="journal article" date="1999" name="Nature">
        <title>The chemokine receptor CCR4 in vascular recognition by cutaneous but not intestinal memory T cells.</title>
        <authorList>
            <person name="Campbell J.J."/>
            <person name="Haraldsen G."/>
            <person name="Pan J."/>
            <person name="Rottman J."/>
            <person name="Qin S."/>
            <person name="Ponath P."/>
            <person name="Andrew D.P."/>
            <person name="Warnke R."/>
            <person name="Ruffing N."/>
            <person name="Kassam N."/>
            <person name="Wu L."/>
            <person name="Butcher E.C."/>
        </authorList>
    </citation>
    <scope>FUNCTION</scope>
</reference>
<reference key="8">
    <citation type="journal article" date="2000" name="J. Immunol.">
        <title>Human NK cells express CC chemokine receptors 4 and 8 and respond to thymus and activation-regulated chemokine, macrophage-derived chemokine, and I-309.</title>
        <authorList>
            <person name="Inngjerdingen M."/>
            <person name="Damaj B."/>
            <person name="Maghazachi A.A."/>
        </authorList>
    </citation>
    <scope>FUNCTION</scope>
    <scope>TISSUE SPECIFICITY</scope>
    <scope>PHOSPHORYLATION</scope>
</reference>
<reference key="9">
    <citation type="journal article" date="2006" name="Life Sci.">
        <title>Chemokine-like factor 1 is a functional ligand for CC chemokine receptor 4 (CCR4).</title>
        <authorList>
            <person name="Wang Y."/>
            <person name="Zhang Y."/>
            <person name="Yang X."/>
            <person name="Han W."/>
            <person name="Liu Y."/>
            <person name="Xu Q."/>
            <person name="Zhao R."/>
            <person name="Di C."/>
            <person name="Song Q."/>
            <person name="Ma D."/>
        </authorList>
    </citation>
    <scope>FUNCTION</scope>
</reference>
<evidence type="ECO:0000255" key="1"/>
<evidence type="ECO:0000255" key="2">
    <source>
        <dbReference type="PROSITE-ProRule" id="PRU00521"/>
    </source>
</evidence>
<evidence type="ECO:0000269" key="3">
    <source>
    </source>
</evidence>
<evidence type="ECO:0000269" key="4">
    <source>
    </source>
</evidence>
<evidence type="ECO:0000269" key="5">
    <source>
    </source>
</evidence>
<evidence type="ECO:0000269" key="6">
    <source>
    </source>
</evidence>
<evidence type="ECO:0000269" key="7">
    <source>
    </source>
</evidence>
<evidence type="ECO:0000269" key="8">
    <source>
    </source>
</evidence>
<keyword id="KW-1003">Cell membrane</keyword>
<keyword id="KW-1015">Disulfide bond</keyword>
<keyword id="KW-0297">G-protein coupled receptor</keyword>
<keyword id="KW-0325">Glycoprotein</keyword>
<keyword id="KW-0472">Membrane</keyword>
<keyword id="KW-0597">Phosphoprotein</keyword>
<keyword id="KW-1267">Proteomics identification</keyword>
<keyword id="KW-0675">Receptor</keyword>
<keyword id="KW-1185">Reference proteome</keyword>
<keyword id="KW-0807">Transducer</keyword>
<keyword id="KW-0812">Transmembrane</keyword>
<keyword id="KW-1133">Transmembrane helix</keyword>
<accession>P51679</accession>
<accession>Q9ULY6</accession>
<accession>Q9ULY7</accession>
<comment type="function">
    <text evidence="3 4 6 7 8">High affinity receptor for the C-C type chemokines CCL17/TARC, CCL22/MDC and CKLF isoform 1/CKLF1. The activity of this receptor is mediated by G(i) proteins which activate a phosphatidylinositol-calcium second messenger system. Can function as a chemoattractant homing receptor on circulating memory lymphocytes and as a coreceptor for some primary HIV-2 isolates. In the CNS, could mediate hippocampal-neuron survival.</text>
</comment>
<comment type="interaction">
    <interactant intactId="EBI-7847466">
        <id>P51679</id>
    </interactant>
    <interactant intactId="EBI-16640146">
        <id>Q92583</id>
        <label>CCL17</label>
    </interactant>
    <organismsDiffer>false</organismsDiffer>
    <experiments>2</experiments>
</comment>
<comment type="interaction">
    <interactant intactId="EBI-7847466">
        <id>P51679</id>
    </interactant>
    <interactant intactId="EBI-11988865">
        <id>A5PKU2</id>
        <label>TUSC5</label>
    </interactant>
    <organismsDiffer>false</organismsDiffer>
    <experiments>3</experiments>
</comment>
<comment type="subcellular location">
    <subcellularLocation>
        <location>Cell membrane</location>
        <topology>Multi-pass membrane protein</topology>
    </subcellularLocation>
</comment>
<comment type="tissue specificity">
    <text evidence="4 7">Predominantly expressed in the thymus, in peripheral blood leukocytes, including T-cells, mostly CD4+ cells, and basophils, and in platelets; at lower levels, in the spleen and in monocytes (PubMed:10754297, PubMed:9169480). Detected also in macrophages, IL-2-activated natural killer cells and skin-homing memory T-cells, mostly the ones expressing the cutaneous lymphocyte antigen (CLA). Expressed in brain microvascular and coronary artery endothelial cells (PubMed:10754297).</text>
</comment>
<comment type="PTM">
    <text evidence="4">In natural killer cells, CCL22 binding induces phosphorylation on yet undefined Ser/Thr residues, most probably by beta-adrenergic receptor kinases 1 and 2.</text>
</comment>
<comment type="similarity">
    <text evidence="2">Belongs to the G-protein coupled receptor 1 family.</text>
</comment>
<comment type="online information" name="Wikipedia">
    <link uri="https://en.wikipedia.org/wiki/CC_chemokine_receptors"/>
    <text>CC chemokine receptors entry</text>
</comment>
<name>CCR4_HUMAN</name>
<feature type="chain" id="PRO_0000069245" description="C-C chemokine receptor type 4">
    <location>
        <begin position="1"/>
        <end position="360"/>
    </location>
</feature>
<feature type="topological domain" description="Extracellular" evidence="1">
    <location>
        <begin position="1"/>
        <end position="39"/>
    </location>
</feature>
<feature type="transmembrane region" description="Helical; Name=1" evidence="1">
    <location>
        <begin position="40"/>
        <end position="67"/>
    </location>
</feature>
<feature type="topological domain" description="Cytoplasmic" evidence="1">
    <location>
        <begin position="68"/>
        <end position="77"/>
    </location>
</feature>
<feature type="transmembrane region" description="Helical; Name=2" evidence="1">
    <location>
        <begin position="78"/>
        <end position="98"/>
    </location>
</feature>
<feature type="topological domain" description="Extracellular" evidence="1">
    <location>
        <begin position="99"/>
        <end position="111"/>
    </location>
</feature>
<feature type="transmembrane region" description="Helical; Name=3" evidence="1">
    <location>
        <begin position="112"/>
        <end position="133"/>
    </location>
</feature>
<feature type="topological domain" description="Cytoplasmic" evidence="1">
    <location>
        <begin position="134"/>
        <end position="150"/>
    </location>
</feature>
<feature type="transmembrane region" description="Helical; Name=4" evidence="1">
    <location>
        <begin position="151"/>
        <end position="175"/>
    </location>
</feature>
<feature type="topological domain" description="Extracellular" evidence="1">
    <location>
        <begin position="176"/>
        <end position="206"/>
    </location>
</feature>
<feature type="transmembrane region" description="Helical; Name=5" evidence="1">
    <location>
        <begin position="207"/>
        <end position="226"/>
    </location>
</feature>
<feature type="topological domain" description="Cytoplasmic" evidence="1">
    <location>
        <begin position="227"/>
        <end position="242"/>
    </location>
</feature>
<feature type="transmembrane region" description="Helical; Name=6" evidence="1">
    <location>
        <begin position="243"/>
        <end position="267"/>
    </location>
</feature>
<feature type="topological domain" description="Extracellular" evidence="1">
    <location>
        <begin position="268"/>
        <end position="284"/>
    </location>
</feature>
<feature type="transmembrane region" description="Helical; Name=7" evidence="1">
    <location>
        <begin position="285"/>
        <end position="308"/>
    </location>
</feature>
<feature type="topological domain" description="Cytoplasmic" evidence="1">
    <location>
        <begin position="309"/>
        <end position="360"/>
    </location>
</feature>
<feature type="glycosylation site" description="N-linked (GlcNAc...) asparagine" evidence="1">
    <location>
        <position position="183"/>
    </location>
</feature>
<feature type="glycosylation site" description="N-linked (GlcNAc...) asparagine" evidence="1">
    <location>
        <position position="194"/>
    </location>
</feature>
<feature type="disulfide bond" evidence="2">
    <location>
        <begin position="110"/>
        <end position="187"/>
    </location>
</feature>
<feature type="sequence variant" id="VAR_010669" evidence="5">
    <original>L</original>
    <variation>V</variation>
    <location>
        <position position="130"/>
    </location>
</feature>
<feature type="sequence variant" id="VAR_010670" description="In dbSNP:rs753825374." evidence="5">
    <original>C</original>
    <variation>S</variation>
    <location>
        <position position="178"/>
    </location>
</feature>
<proteinExistence type="evidence at protein level"/>
<protein>
    <recommendedName>
        <fullName>C-C chemokine receptor type 4</fullName>
        <shortName>C-C CKR-4</shortName>
        <shortName>CC-CKR-4</shortName>
        <shortName>CCR-4</shortName>
        <shortName>CCR4</shortName>
    </recommendedName>
    <alternativeName>
        <fullName>K5-5</fullName>
    </alternativeName>
    <cdAntigenName>CD194</cdAntigenName>
</protein>
<dbReference type="EMBL" id="X85740">
    <property type="protein sequence ID" value="CAA59743.1"/>
    <property type="molecule type" value="mRNA"/>
</dbReference>
<dbReference type="EMBL" id="AB023888">
    <property type="protein sequence ID" value="BAA86965.1"/>
    <property type="molecule type" value="Genomic_DNA"/>
</dbReference>
<dbReference type="EMBL" id="AB023889">
    <property type="protein sequence ID" value="BAA86966.1"/>
    <property type="molecule type" value="Genomic_DNA"/>
</dbReference>
<dbReference type="EMBL" id="AB023890">
    <property type="protein sequence ID" value="BAA86967.1"/>
    <property type="molecule type" value="Genomic_DNA"/>
</dbReference>
<dbReference type="EMBL" id="AB023891">
    <property type="protein sequence ID" value="BAA86968.1"/>
    <property type="molecule type" value="Genomic_DNA"/>
</dbReference>
<dbReference type="EMBL" id="AB023892">
    <property type="protein sequence ID" value="BAA86969.1"/>
    <property type="molecule type" value="Genomic_DNA"/>
</dbReference>
<dbReference type="EMBL" id="AY322539">
    <property type="protein sequence ID" value="AAP84352.1"/>
    <property type="molecule type" value="Genomic_DNA"/>
</dbReference>
<dbReference type="EMBL" id="BC069139">
    <property type="protein sequence ID" value="AAH69139.1"/>
    <property type="molecule type" value="mRNA"/>
</dbReference>
<dbReference type="EMBL" id="BC071751">
    <property type="protein sequence ID" value="AAH71751.1"/>
    <property type="molecule type" value="mRNA"/>
</dbReference>
<dbReference type="EMBL" id="BC074935">
    <property type="protein sequence ID" value="AAH74935.1"/>
    <property type="molecule type" value="mRNA"/>
</dbReference>
<dbReference type="CCDS" id="CCDS2656.1"/>
<dbReference type="PIR" id="A57160">
    <property type="entry name" value="A57160"/>
</dbReference>
<dbReference type="RefSeq" id="NP_005499.1">
    <property type="nucleotide sequence ID" value="NM_005508.5"/>
</dbReference>
<dbReference type="RefSeq" id="XP_016861176.1">
    <property type="nucleotide sequence ID" value="XM_017005687.2"/>
</dbReference>
<dbReference type="RefSeq" id="XP_054201145.1">
    <property type="nucleotide sequence ID" value="XM_054345170.1"/>
</dbReference>
<dbReference type="SMR" id="P51679"/>
<dbReference type="BioGRID" id="107638">
    <property type="interactions" value="37"/>
</dbReference>
<dbReference type="DIP" id="DIP-5848N"/>
<dbReference type="FunCoup" id="P51679">
    <property type="interactions" value="966"/>
</dbReference>
<dbReference type="IntAct" id="P51679">
    <property type="interactions" value="33"/>
</dbReference>
<dbReference type="MINT" id="P51679"/>
<dbReference type="STRING" id="9606.ENSP00000332659"/>
<dbReference type="BindingDB" id="P51679"/>
<dbReference type="ChEMBL" id="CHEMBL2414"/>
<dbReference type="DrugBank" id="DB15570">
    <property type="generic name" value="FLX475"/>
</dbReference>
<dbReference type="DrugBank" id="DB12498">
    <property type="generic name" value="Mogamulizumab"/>
</dbReference>
<dbReference type="DrugCentral" id="P51679"/>
<dbReference type="GuidetoPHARMACOLOGY" id="61"/>
<dbReference type="GlyCosmos" id="P51679">
    <property type="glycosylation" value="2 sites, No reported glycans"/>
</dbReference>
<dbReference type="GlyGen" id="P51679">
    <property type="glycosylation" value="2 sites"/>
</dbReference>
<dbReference type="iPTMnet" id="P51679"/>
<dbReference type="PhosphoSitePlus" id="P51679"/>
<dbReference type="BioMuta" id="CCR4"/>
<dbReference type="DMDM" id="1705894"/>
<dbReference type="MassIVE" id="P51679"/>
<dbReference type="PaxDb" id="9606-ENSP00000332659"/>
<dbReference type="PeptideAtlas" id="P51679"/>
<dbReference type="ProteomicsDB" id="56366"/>
<dbReference type="ABCD" id="P51679">
    <property type="antibodies" value="1 sequenced antibody"/>
</dbReference>
<dbReference type="Antibodypedia" id="11668">
    <property type="antibodies" value="793 antibodies from 40 providers"/>
</dbReference>
<dbReference type="DNASU" id="1233"/>
<dbReference type="Ensembl" id="ENST00000330953.6">
    <property type="protein sequence ID" value="ENSP00000332659.5"/>
    <property type="gene ID" value="ENSG00000183813.8"/>
</dbReference>
<dbReference type="Ensembl" id="ENST00000718415.1">
    <property type="protein sequence ID" value="ENSP00000520802.1"/>
    <property type="gene ID" value="ENSG00000183813.8"/>
</dbReference>
<dbReference type="GeneID" id="1233"/>
<dbReference type="KEGG" id="hsa:1233"/>
<dbReference type="MANE-Select" id="ENST00000330953.6">
    <property type="protein sequence ID" value="ENSP00000332659.5"/>
    <property type="RefSeq nucleotide sequence ID" value="NM_005508.5"/>
    <property type="RefSeq protein sequence ID" value="NP_005499.1"/>
</dbReference>
<dbReference type="UCSC" id="uc003cfg.2">
    <property type="organism name" value="human"/>
</dbReference>
<dbReference type="AGR" id="HGNC:1605"/>
<dbReference type="CTD" id="1233"/>
<dbReference type="DisGeNET" id="1233"/>
<dbReference type="GeneCards" id="CCR4"/>
<dbReference type="HGNC" id="HGNC:1605">
    <property type="gene designation" value="CCR4"/>
</dbReference>
<dbReference type="HPA" id="ENSG00000183813">
    <property type="expression patterns" value="Tissue enhanced (lymphoid tissue, urinary bladder)"/>
</dbReference>
<dbReference type="MIM" id="604836">
    <property type="type" value="gene"/>
</dbReference>
<dbReference type="neXtProt" id="NX_P51679"/>
<dbReference type="OpenTargets" id="ENSG00000183813"/>
<dbReference type="PharmGKB" id="PA26169"/>
<dbReference type="VEuPathDB" id="HostDB:ENSG00000183813"/>
<dbReference type="eggNOG" id="KOG3656">
    <property type="taxonomic scope" value="Eukaryota"/>
</dbReference>
<dbReference type="GeneTree" id="ENSGT01020000230359"/>
<dbReference type="HOGENOM" id="CLU_009579_8_3_1"/>
<dbReference type="InParanoid" id="P51679"/>
<dbReference type="OMA" id="CKIISWM"/>
<dbReference type="OrthoDB" id="5981253at2759"/>
<dbReference type="PAN-GO" id="P51679">
    <property type="GO annotations" value="7 GO annotations based on evolutionary models"/>
</dbReference>
<dbReference type="PhylomeDB" id="P51679"/>
<dbReference type="TreeFam" id="TF330966"/>
<dbReference type="PathwayCommons" id="P51679"/>
<dbReference type="Reactome" id="R-HSA-380108">
    <property type="pathway name" value="Chemokine receptors bind chemokines"/>
</dbReference>
<dbReference type="Reactome" id="R-HSA-418594">
    <property type="pathway name" value="G alpha (i) signalling events"/>
</dbReference>
<dbReference type="SignaLink" id="P51679"/>
<dbReference type="SIGNOR" id="P51679"/>
<dbReference type="BioGRID-ORCS" id="1233">
    <property type="hits" value="11 hits in 1146 CRISPR screens"/>
</dbReference>
<dbReference type="CD-CODE" id="DEE660B4">
    <property type="entry name" value="Stress granule"/>
</dbReference>
<dbReference type="GeneWiki" id="CCR4"/>
<dbReference type="GenomeRNAi" id="1233"/>
<dbReference type="Pharos" id="P51679">
    <property type="development level" value="Tclin"/>
</dbReference>
<dbReference type="PRO" id="PR:P51679"/>
<dbReference type="Proteomes" id="UP000005640">
    <property type="component" value="Chromosome 3"/>
</dbReference>
<dbReference type="RNAct" id="P51679">
    <property type="molecule type" value="protein"/>
</dbReference>
<dbReference type="Bgee" id="ENSG00000183813">
    <property type="expression patterns" value="Expressed in male germ line stem cell (sensu Vertebrata) in testis and 71 other cell types or tissues"/>
</dbReference>
<dbReference type="ExpressionAtlas" id="P51679">
    <property type="expression patterns" value="baseline and differential"/>
</dbReference>
<dbReference type="GO" id="GO:0009897">
    <property type="term" value="C:external side of plasma membrane"/>
    <property type="evidence" value="ECO:0000318"/>
    <property type="project" value="GO_Central"/>
</dbReference>
<dbReference type="GO" id="GO:0005886">
    <property type="term" value="C:plasma membrane"/>
    <property type="evidence" value="ECO:0000314"/>
    <property type="project" value="HPA"/>
</dbReference>
<dbReference type="GO" id="GO:0019957">
    <property type="term" value="F:C-C chemokine binding"/>
    <property type="evidence" value="ECO:0000318"/>
    <property type="project" value="GO_Central"/>
</dbReference>
<dbReference type="GO" id="GO:0016493">
    <property type="term" value="F:C-C chemokine receptor activity"/>
    <property type="evidence" value="ECO:0000318"/>
    <property type="project" value="GO_Central"/>
</dbReference>
<dbReference type="GO" id="GO:0004950">
    <property type="term" value="F:chemokine receptor activity"/>
    <property type="evidence" value="ECO:0000304"/>
    <property type="project" value="ProtInc"/>
</dbReference>
<dbReference type="GO" id="GO:0019722">
    <property type="term" value="P:calcium-mediated signaling"/>
    <property type="evidence" value="ECO:0000318"/>
    <property type="project" value="GO_Central"/>
</dbReference>
<dbReference type="GO" id="GO:0060326">
    <property type="term" value="P:cell chemotaxis"/>
    <property type="evidence" value="ECO:0000318"/>
    <property type="project" value="GO_Central"/>
</dbReference>
<dbReference type="GO" id="GO:0006935">
    <property type="term" value="P:chemotaxis"/>
    <property type="evidence" value="ECO:0000304"/>
    <property type="project" value="ProtInc"/>
</dbReference>
<dbReference type="GO" id="GO:0048872">
    <property type="term" value="P:homeostasis of number of cells"/>
    <property type="evidence" value="ECO:0007669"/>
    <property type="project" value="Ensembl"/>
</dbReference>
<dbReference type="GO" id="GO:0006955">
    <property type="term" value="P:immune response"/>
    <property type="evidence" value="ECO:0000318"/>
    <property type="project" value="GO_Central"/>
</dbReference>
<dbReference type="GO" id="GO:0006954">
    <property type="term" value="P:inflammatory response"/>
    <property type="evidence" value="ECO:0000304"/>
    <property type="project" value="ProtInc"/>
</dbReference>
<dbReference type="GO" id="GO:1904936">
    <property type="term" value="P:interneuron migration"/>
    <property type="evidence" value="ECO:0007669"/>
    <property type="project" value="Ensembl"/>
</dbReference>
<dbReference type="GO" id="GO:0007204">
    <property type="term" value="P:positive regulation of cytosolic calcium ion concentration"/>
    <property type="evidence" value="ECO:0000318"/>
    <property type="project" value="GO_Central"/>
</dbReference>
<dbReference type="GO" id="GO:0002507">
    <property type="term" value="P:tolerance induction"/>
    <property type="evidence" value="ECO:0007669"/>
    <property type="project" value="Ensembl"/>
</dbReference>
<dbReference type="CDD" id="cd14984">
    <property type="entry name" value="7tmA_Chemokine_R"/>
    <property type="match status" value="1"/>
</dbReference>
<dbReference type="FunFam" id="1.20.1070.10:FF:000026">
    <property type="entry name" value="C-C chemokine receptor type 5"/>
    <property type="match status" value="1"/>
</dbReference>
<dbReference type="Gene3D" id="1.20.1070.10">
    <property type="entry name" value="Rhodopsin 7-helix transmembrane proteins"/>
    <property type="match status" value="1"/>
</dbReference>
<dbReference type="InterPro" id="IPR050119">
    <property type="entry name" value="CCR1-9-like"/>
</dbReference>
<dbReference type="InterPro" id="IPR002239">
    <property type="entry name" value="Chemokine_CCR4"/>
</dbReference>
<dbReference type="InterPro" id="IPR000355">
    <property type="entry name" value="Chemokine_rcpt"/>
</dbReference>
<dbReference type="InterPro" id="IPR000276">
    <property type="entry name" value="GPCR_Rhodpsn"/>
</dbReference>
<dbReference type="InterPro" id="IPR017452">
    <property type="entry name" value="GPCR_Rhodpsn_7TM"/>
</dbReference>
<dbReference type="PANTHER" id="PTHR10489:SF608">
    <property type="entry name" value="C-C CHEMOKINE RECEPTOR TYPE 4"/>
    <property type="match status" value="1"/>
</dbReference>
<dbReference type="PANTHER" id="PTHR10489">
    <property type="entry name" value="CELL ADHESION MOLECULE"/>
    <property type="match status" value="1"/>
</dbReference>
<dbReference type="Pfam" id="PF00001">
    <property type="entry name" value="7tm_1"/>
    <property type="match status" value="1"/>
</dbReference>
<dbReference type="PRINTS" id="PR00657">
    <property type="entry name" value="CCCHEMOKINER"/>
</dbReference>
<dbReference type="PRINTS" id="PR01109">
    <property type="entry name" value="CHEMOKINER4"/>
</dbReference>
<dbReference type="PRINTS" id="PR00237">
    <property type="entry name" value="GPCRRHODOPSN"/>
</dbReference>
<dbReference type="SMART" id="SM01381">
    <property type="entry name" value="7TM_GPCR_Srsx"/>
    <property type="match status" value="1"/>
</dbReference>
<dbReference type="SUPFAM" id="SSF81321">
    <property type="entry name" value="Family A G protein-coupled receptor-like"/>
    <property type="match status" value="1"/>
</dbReference>
<dbReference type="PROSITE" id="PS00237">
    <property type="entry name" value="G_PROTEIN_RECEP_F1_1"/>
    <property type="match status" value="1"/>
</dbReference>
<dbReference type="PROSITE" id="PS50262">
    <property type="entry name" value="G_PROTEIN_RECEP_F1_2"/>
    <property type="match status" value="1"/>
</dbReference>
<organism>
    <name type="scientific">Homo sapiens</name>
    <name type="common">Human</name>
    <dbReference type="NCBI Taxonomy" id="9606"/>
    <lineage>
        <taxon>Eukaryota</taxon>
        <taxon>Metazoa</taxon>
        <taxon>Chordata</taxon>
        <taxon>Craniata</taxon>
        <taxon>Vertebrata</taxon>
        <taxon>Euteleostomi</taxon>
        <taxon>Mammalia</taxon>
        <taxon>Eutheria</taxon>
        <taxon>Euarchontoglires</taxon>
        <taxon>Primates</taxon>
        <taxon>Haplorrhini</taxon>
        <taxon>Catarrhini</taxon>
        <taxon>Hominidae</taxon>
        <taxon>Homo</taxon>
    </lineage>
</organism>